<proteinExistence type="evidence at protein level"/>
<comment type="function">
    <text>Component of the sarcoglycan complex, a subcomplex of the dystrophin-glycoprotein complex which forms a link between the F-actin cytoskeleton and the extracellular matrix.</text>
</comment>
<comment type="subunit">
    <text evidence="1 4">Cross-link to form 2 major subcomplexes: one consisting of SGCB, SGCD and SGCG and the other consisting of SGCB and SGCD. The association between SGCB and SGCG is particularly strong while SGCA is loosely associated with the other sarcoglycans (By similarity). Interacts with the syntrophin SNTA1.</text>
</comment>
<comment type="subcellular location">
    <subcellularLocation>
        <location evidence="1">Cell membrane</location>
        <location evidence="1">Sarcolemma</location>
        <topology evidence="1">Single-pass type I membrane protein</topology>
    </subcellularLocation>
    <subcellularLocation>
        <location evidence="1">Cytoplasm</location>
        <location evidence="1">Cytoskeleton</location>
    </subcellularLocation>
</comment>
<comment type="similarity">
    <text evidence="5">Belongs to the sarcoglycan alpha/epsilon family.</text>
</comment>
<sequence>MAAAALLWLPLLVGCLAGPGGTEAQQTTLYPLVGRVFVHTLEPASFLHLPEHAAPATIPVTYHAHLQGHPDLPRWLRYTQRSPHHPGFLYGAATPEDRGRQVIEVTAYNRDSFDTAGQSLVLLIRDPEGSPLPYQTEFLVRSHDVEEVLPPTPASHFLTALAGLWEPGELKLLNITSALDRGGRVPLPIGGQKEGVYIKVGSASPFSTCLKMVASPDSHARCARGQPPLLSCYDTLAPHFRVDWCNVSLVDTSVPEPVDEVPTPGDGILEHDPFFCPPTEATARDFLADALVTLLVPLLVALLLALLLAYIMCCRREGRLKRDLATSDIQMVHHCTIHENTEELRQMAASREVPRPLFPLPMFNVRTGERMPPRVDSAQVPLILDQH</sequence>
<keyword id="KW-0002">3D-structure</keyword>
<keyword id="KW-1003">Cell membrane</keyword>
<keyword id="KW-0963">Cytoplasm</keyword>
<keyword id="KW-0206">Cytoskeleton</keyword>
<keyword id="KW-0325">Glycoprotein</keyword>
<keyword id="KW-0472">Membrane</keyword>
<keyword id="KW-0597">Phosphoprotein</keyword>
<keyword id="KW-1185">Reference proteome</keyword>
<keyword id="KW-0732">Signal</keyword>
<keyword id="KW-0812">Transmembrane</keyword>
<keyword id="KW-1133">Transmembrane helix</keyword>
<feature type="signal peptide" evidence="3">
    <location>
        <begin position="1"/>
        <end position="24"/>
    </location>
</feature>
<feature type="chain" id="PRO_0000031676" description="Alpha-sarcoglycan">
    <location>
        <begin position="25"/>
        <end position="387"/>
    </location>
</feature>
<feature type="topological domain" description="Extracellular" evidence="3">
    <location>
        <begin position="25"/>
        <end position="290"/>
    </location>
</feature>
<feature type="transmembrane region" description="Helical" evidence="3">
    <location>
        <begin position="291"/>
        <end position="311"/>
    </location>
</feature>
<feature type="topological domain" description="Cytoplasmic" evidence="3">
    <location>
        <begin position="312"/>
        <end position="387"/>
    </location>
</feature>
<feature type="modified residue" description="Phosphoserine" evidence="2">
    <location>
        <position position="377"/>
    </location>
</feature>
<feature type="glycosylation site" description="N-linked (GlcNAc...) asparagine" evidence="3">
    <location>
        <position position="174"/>
    </location>
</feature>
<feature type="glycosylation site" description="N-linked (GlcNAc...) asparagine" evidence="3">
    <location>
        <position position="246"/>
    </location>
</feature>
<feature type="sequence variant">
    <original>FP</original>
    <variation>ST</variation>
    <location>
        <begin position="358"/>
        <end position="359"/>
    </location>
</feature>
<dbReference type="EMBL" id="U01117">
    <property type="protein sequence ID" value="AAB60264.1"/>
    <property type="molecule type" value="mRNA"/>
</dbReference>
<dbReference type="PIR" id="A49498">
    <property type="entry name" value="A49498"/>
</dbReference>
<dbReference type="RefSeq" id="NP_001075801.1">
    <property type="nucleotide sequence ID" value="NM_001082332.2"/>
</dbReference>
<dbReference type="PDB" id="9C3C">
    <property type="method" value="EM"/>
    <property type="resolution" value="4.30 A"/>
    <property type="chains" value="a=25-350"/>
</dbReference>
<dbReference type="PDBsum" id="9C3C"/>
<dbReference type="EMDB" id="EMD-45165"/>
<dbReference type="SMR" id="Q28686"/>
<dbReference type="CORUM" id="Q28686"/>
<dbReference type="FunCoup" id="Q28686">
    <property type="interactions" value="22"/>
</dbReference>
<dbReference type="STRING" id="9986.ENSOCUP00000018374"/>
<dbReference type="GlyCosmos" id="Q28686">
    <property type="glycosylation" value="2 sites, No reported glycans"/>
</dbReference>
<dbReference type="GeneID" id="100009178"/>
<dbReference type="KEGG" id="ocu:100009178"/>
<dbReference type="CTD" id="6442"/>
<dbReference type="InParanoid" id="Q28686"/>
<dbReference type="OrthoDB" id="10019906at2759"/>
<dbReference type="Proteomes" id="UP000001811">
    <property type="component" value="Unplaced"/>
</dbReference>
<dbReference type="GO" id="GO:0005737">
    <property type="term" value="C:cytoplasm"/>
    <property type="evidence" value="ECO:0007669"/>
    <property type="project" value="UniProtKB-KW"/>
</dbReference>
<dbReference type="GO" id="GO:0005856">
    <property type="term" value="C:cytoskeleton"/>
    <property type="evidence" value="ECO:0007669"/>
    <property type="project" value="UniProtKB-SubCell"/>
</dbReference>
<dbReference type="GO" id="GO:0016012">
    <property type="term" value="C:sarcoglycan complex"/>
    <property type="evidence" value="ECO:0007669"/>
    <property type="project" value="InterPro"/>
</dbReference>
<dbReference type="GO" id="GO:0042383">
    <property type="term" value="C:sarcolemma"/>
    <property type="evidence" value="ECO:0007669"/>
    <property type="project" value="UniProtKB-SubCell"/>
</dbReference>
<dbReference type="GO" id="GO:0005509">
    <property type="term" value="F:calcium ion binding"/>
    <property type="evidence" value="ECO:0007669"/>
    <property type="project" value="InterPro"/>
</dbReference>
<dbReference type="CDD" id="cd11303">
    <property type="entry name" value="Dystroglycan_repeat"/>
    <property type="match status" value="1"/>
</dbReference>
<dbReference type="InterPro" id="IPR006644">
    <property type="entry name" value="Cadg"/>
</dbReference>
<dbReference type="InterPro" id="IPR015919">
    <property type="entry name" value="Cadherin-like_sf"/>
</dbReference>
<dbReference type="InterPro" id="IPR008908">
    <property type="entry name" value="Sarcoglycan_alpha/epsilon"/>
</dbReference>
<dbReference type="InterPro" id="IPR048347">
    <property type="entry name" value="Sarcoglycan_C"/>
</dbReference>
<dbReference type="InterPro" id="IPR048346">
    <property type="entry name" value="Sarcoglycan_N"/>
</dbReference>
<dbReference type="PANTHER" id="PTHR10132">
    <property type="entry name" value="ALPHA-/EPSILON-SARCOGLYCAN FAMILY MEMBER"/>
    <property type="match status" value="1"/>
</dbReference>
<dbReference type="PANTHER" id="PTHR10132:SF16">
    <property type="entry name" value="ALPHA-SARCOGLYCAN"/>
    <property type="match status" value="1"/>
</dbReference>
<dbReference type="Pfam" id="PF05510">
    <property type="entry name" value="Sarcoglycan_2"/>
    <property type="match status" value="1"/>
</dbReference>
<dbReference type="Pfam" id="PF20989">
    <property type="entry name" value="Sarcoglycan_2_C"/>
    <property type="match status" value="1"/>
</dbReference>
<dbReference type="SMART" id="SM00736">
    <property type="entry name" value="CADG"/>
    <property type="match status" value="1"/>
</dbReference>
<dbReference type="SUPFAM" id="SSF49313">
    <property type="entry name" value="Cadherin-like"/>
    <property type="match status" value="1"/>
</dbReference>
<reference key="1">
    <citation type="journal article" date="1993" name="J. Biol. Chem.">
        <title>Primary structure and muscle-specific expression of the 50-kDa dystrophin-associated glycoprotein (adhalin).</title>
        <authorList>
            <person name="Roberds S.L."/>
            <person name="Anderson R.D."/>
            <person name="Ibraghimov-Beskrovnaya O."/>
            <person name="Campbell K.P."/>
        </authorList>
    </citation>
    <scope>NUCLEOTIDE SEQUENCE [MRNA]</scope>
    <source>
        <tissue>Skeletal muscle</tissue>
    </source>
</reference>
<reference key="2">
    <citation type="journal article" date="1995" name="J. Biol. Chem.">
        <title>Identification of alpha-syntrophin binding to syntrophin triplet, dystrophin, and utrophin.</title>
        <authorList>
            <person name="Yang B."/>
            <person name="Jung D."/>
            <person name="Rafael J.A."/>
            <person name="Chamberlain J.S."/>
            <person name="Campbell K.P."/>
        </authorList>
    </citation>
    <scope>INTERACTION WITH SNTA1</scope>
</reference>
<gene>
    <name type="primary">SGCA</name>
    <name type="synonym">ADL</name>
    <name type="synonym">DAG2</name>
</gene>
<name>SGCA_RABIT</name>
<organism>
    <name type="scientific">Oryctolagus cuniculus</name>
    <name type="common">Rabbit</name>
    <dbReference type="NCBI Taxonomy" id="9986"/>
    <lineage>
        <taxon>Eukaryota</taxon>
        <taxon>Metazoa</taxon>
        <taxon>Chordata</taxon>
        <taxon>Craniata</taxon>
        <taxon>Vertebrata</taxon>
        <taxon>Euteleostomi</taxon>
        <taxon>Mammalia</taxon>
        <taxon>Eutheria</taxon>
        <taxon>Euarchontoglires</taxon>
        <taxon>Glires</taxon>
        <taxon>Lagomorpha</taxon>
        <taxon>Leporidae</taxon>
        <taxon>Oryctolagus</taxon>
    </lineage>
</organism>
<accession>Q28686</accession>
<protein>
    <recommendedName>
        <fullName>Alpha-sarcoglycan</fullName>
        <shortName>Alpha-SG</shortName>
    </recommendedName>
    <alternativeName>
        <fullName>50 kDa dystrophin-associated glycoprotein</fullName>
        <shortName>50DAG</shortName>
    </alternativeName>
    <alternativeName>
        <fullName>Adhalin</fullName>
    </alternativeName>
    <alternativeName>
        <fullName>Dystroglycan-2</fullName>
    </alternativeName>
</protein>
<evidence type="ECO:0000250" key="1"/>
<evidence type="ECO:0000250" key="2">
    <source>
        <dbReference type="UniProtKB" id="P82350"/>
    </source>
</evidence>
<evidence type="ECO:0000255" key="3"/>
<evidence type="ECO:0000269" key="4">
    <source>
    </source>
</evidence>
<evidence type="ECO:0000305" key="5"/>